<organism>
    <name type="scientific">Bos taurus</name>
    <name type="common">Bovine</name>
    <dbReference type="NCBI Taxonomy" id="9913"/>
    <lineage>
        <taxon>Eukaryota</taxon>
        <taxon>Metazoa</taxon>
        <taxon>Chordata</taxon>
        <taxon>Craniata</taxon>
        <taxon>Vertebrata</taxon>
        <taxon>Euteleostomi</taxon>
        <taxon>Mammalia</taxon>
        <taxon>Eutheria</taxon>
        <taxon>Laurasiatheria</taxon>
        <taxon>Artiodactyla</taxon>
        <taxon>Ruminantia</taxon>
        <taxon>Pecora</taxon>
        <taxon>Bovidae</taxon>
        <taxon>Bovinae</taxon>
        <taxon>Bos</taxon>
    </lineage>
</organism>
<keyword id="KW-0227">DNA damage</keyword>
<keyword id="KW-0234">DNA repair</keyword>
<keyword id="KW-0479">Metal-binding</keyword>
<keyword id="KW-0539">Nucleus</keyword>
<keyword id="KW-0597">Phosphoprotein</keyword>
<keyword id="KW-1185">Reference proteome</keyword>
<keyword id="KW-0804">Transcription</keyword>
<keyword id="KW-0805">Transcription regulation</keyword>
<keyword id="KW-0862">Zinc</keyword>
<keyword id="KW-0863">Zinc-finger</keyword>
<reference key="1">
    <citation type="submission" date="2005-11" db="EMBL/GenBank/DDBJ databases">
        <authorList>
            <consortium name="NIH - Mammalian Gene Collection (MGC) project"/>
        </authorList>
    </citation>
    <scope>NUCLEOTIDE SEQUENCE [LARGE SCALE MRNA]</scope>
    <source>
        <strain>Crossbred X Angus</strain>
        <tissue>Liver</tissue>
    </source>
</reference>
<dbReference type="EMBL" id="BC109593">
    <property type="protein sequence ID" value="AAI09594.1"/>
    <property type="molecule type" value="mRNA"/>
</dbReference>
<dbReference type="RefSeq" id="NP_001033619.1">
    <property type="nucleotide sequence ID" value="NM_001038530.1"/>
</dbReference>
<dbReference type="SMR" id="Q2TBV5"/>
<dbReference type="FunCoup" id="Q2TBV5">
    <property type="interactions" value="2884"/>
</dbReference>
<dbReference type="STRING" id="9913.ENSBTAP00000061028"/>
<dbReference type="PaxDb" id="9913-ENSBTAP00000040137"/>
<dbReference type="GeneID" id="511829"/>
<dbReference type="KEGG" id="bta:511829"/>
<dbReference type="CTD" id="2966"/>
<dbReference type="VEuPathDB" id="HostDB:ENSBTAG00000027983"/>
<dbReference type="eggNOG" id="KOG2807">
    <property type="taxonomic scope" value="Eukaryota"/>
</dbReference>
<dbReference type="InParanoid" id="Q2TBV5"/>
<dbReference type="OrthoDB" id="284275at2759"/>
<dbReference type="Reactome" id="R-BTA-113418">
    <property type="pathway name" value="Formation of the Early Elongation Complex"/>
</dbReference>
<dbReference type="Reactome" id="R-BTA-5696395">
    <property type="pathway name" value="Formation of Incision Complex in GG-NER"/>
</dbReference>
<dbReference type="Reactome" id="R-BTA-5696400">
    <property type="pathway name" value="Dual Incision in GG-NER"/>
</dbReference>
<dbReference type="Reactome" id="R-BTA-674695">
    <property type="pathway name" value="RNA Polymerase II Pre-transcription Events"/>
</dbReference>
<dbReference type="Reactome" id="R-BTA-6781823">
    <property type="pathway name" value="Formation of TC-NER Pre-Incision Complex"/>
</dbReference>
<dbReference type="Reactome" id="R-BTA-6782135">
    <property type="pathway name" value="Dual incision in TC-NER"/>
</dbReference>
<dbReference type="Reactome" id="R-BTA-6782210">
    <property type="pathway name" value="Gap-filling DNA repair synthesis and ligation in TC-NER"/>
</dbReference>
<dbReference type="Reactome" id="R-BTA-6796648">
    <property type="pathway name" value="TP53 Regulates Transcription of DNA Repair Genes"/>
</dbReference>
<dbReference type="Reactome" id="R-BTA-72086">
    <property type="pathway name" value="mRNA Capping"/>
</dbReference>
<dbReference type="Reactome" id="R-BTA-73762">
    <property type="pathway name" value="RNA Polymerase I Transcription Initiation"/>
</dbReference>
<dbReference type="Reactome" id="R-BTA-73772">
    <property type="pathway name" value="RNA Polymerase I Promoter Escape"/>
</dbReference>
<dbReference type="Reactome" id="R-BTA-73776">
    <property type="pathway name" value="RNA Polymerase II Promoter Escape"/>
</dbReference>
<dbReference type="Reactome" id="R-BTA-73779">
    <property type="pathway name" value="RNA Polymerase II Transcription Pre-Initiation And Promoter Opening"/>
</dbReference>
<dbReference type="Reactome" id="R-BTA-73863">
    <property type="pathway name" value="RNA Polymerase I Transcription Termination"/>
</dbReference>
<dbReference type="Reactome" id="R-BTA-75953">
    <property type="pathway name" value="RNA Polymerase II Transcription Initiation"/>
</dbReference>
<dbReference type="Reactome" id="R-BTA-75955">
    <property type="pathway name" value="RNA Polymerase II Transcription Elongation"/>
</dbReference>
<dbReference type="Reactome" id="R-BTA-76042">
    <property type="pathway name" value="RNA Polymerase II Transcription Initiation And Promoter Clearance"/>
</dbReference>
<dbReference type="Reactome" id="R-BTA-77075">
    <property type="pathway name" value="RNA Pol II CTD phosphorylation and interaction with CE"/>
</dbReference>
<dbReference type="CD-CODE" id="D7FE2080">
    <property type="entry name" value="Nucleolus"/>
</dbReference>
<dbReference type="Proteomes" id="UP000009136">
    <property type="component" value="Chromosome 20"/>
</dbReference>
<dbReference type="Bgee" id="ENSBTAG00000027983">
    <property type="expression patterns" value="Expressed in oocyte and 106 other cell types or tissues"/>
</dbReference>
<dbReference type="GO" id="GO:0000438">
    <property type="term" value="C:core TFIIH complex portion of holo TFIIH complex"/>
    <property type="evidence" value="ECO:0000250"/>
    <property type="project" value="UniProtKB"/>
</dbReference>
<dbReference type="GO" id="GO:0005634">
    <property type="term" value="C:nucleus"/>
    <property type="evidence" value="ECO:0000250"/>
    <property type="project" value="UniProtKB"/>
</dbReference>
<dbReference type="GO" id="GO:0005675">
    <property type="term" value="C:transcription factor TFIIH holo complex"/>
    <property type="evidence" value="ECO:0000250"/>
    <property type="project" value="UniProtKB"/>
</dbReference>
<dbReference type="GO" id="GO:0008270">
    <property type="term" value="F:zinc ion binding"/>
    <property type="evidence" value="ECO:0007669"/>
    <property type="project" value="UniProtKB-KW"/>
</dbReference>
<dbReference type="GO" id="GO:0006289">
    <property type="term" value="P:nucleotide-excision repair"/>
    <property type="evidence" value="ECO:0000318"/>
    <property type="project" value="GO_Central"/>
</dbReference>
<dbReference type="GO" id="GO:0006357">
    <property type="term" value="P:regulation of transcription by RNA polymerase II"/>
    <property type="evidence" value="ECO:0000318"/>
    <property type="project" value="GO_Central"/>
</dbReference>
<dbReference type="GO" id="GO:0006366">
    <property type="term" value="P:transcription by RNA polymerase II"/>
    <property type="evidence" value="ECO:0000250"/>
    <property type="project" value="UniProtKB"/>
</dbReference>
<dbReference type="CDD" id="cd01453">
    <property type="entry name" value="vWA_transcription_factor_IIH_type"/>
    <property type="match status" value="1"/>
</dbReference>
<dbReference type="FunFam" id="3.30.40.10:FF:000282">
    <property type="entry name" value="General transcription factor IIH subunit"/>
    <property type="match status" value="1"/>
</dbReference>
<dbReference type="FunFam" id="3.40.50.410:FF:000015">
    <property type="entry name" value="General transcription factor IIH subunit 2"/>
    <property type="match status" value="1"/>
</dbReference>
<dbReference type="Gene3D" id="3.40.50.410">
    <property type="entry name" value="von Willebrand factor, type A domain"/>
    <property type="match status" value="1"/>
</dbReference>
<dbReference type="Gene3D" id="3.30.40.10">
    <property type="entry name" value="Zinc/RING finger domain, C3HC4 (zinc finger)"/>
    <property type="match status" value="1"/>
</dbReference>
<dbReference type="InterPro" id="IPR046349">
    <property type="entry name" value="C1-like_sf"/>
</dbReference>
<dbReference type="InterPro" id="IPR007198">
    <property type="entry name" value="Ssl1-like"/>
</dbReference>
<dbReference type="InterPro" id="IPR004595">
    <property type="entry name" value="TFIIH_C1-like_dom"/>
</dbReference>
<dbReference type="InterPro" id="IPR012170">
    <property type="entry name" value="TFIIH_SSL1/p44"/>
</dbReference>
<dbReference type="InterPro" id="IPR002035">
    <property type="entry name" value="VWF_A"/>
</dbReference>
<dbReference type="InterPro" id="IPR036465">
    <property type="entry name" value="vWFA_dom_sf"/>
</dbReference>
<dbReference type="InterPro" id="IPR013087">
    <property type="entry name" value="Znf_C2H2_type"/>
</dbReference>
<dbReference type="InterPro" id="IPR013083">
    <property type="entry name" value="Znf_RING/FYVE/PHD"/>
</dbReference>
<dbReference type="NCBIfam" id="TIGR00622">
    <property type="entry name" value="ssl1"/>
    <property type="match status" value="1"/>
</dbReference>
<dbReference type="PANTHER" id="PTHR12695">
    <property type="entry name" value="GENERAL TRANSCRIPTION FACTOR IIH SUBUNIT 2"/>
    <property type="match status" value="1"/>
</dbReference>
<dbReference type="PANTHER" id="PTHR12695:SF2">
    <property type="entry name" value="GENERAL TRANSCRIPTION FACTOR IIH SUBUNIT 2-RELATED"/>
    <property type="match status" value="1"/>
</dbReference>
<dbReference type="Pfam" id="PF07975">
    <property type="entry name" value="C1_4"/>
    <property type="match status" value="1"/>
</dbReference>
<dbReference type="Pfam" id="PF04056">
    <property type="entry name" value="Ssl1"/>
    <property type="match status" value="1"/>
</dbReference>
<dbReference type="PIRSF" id="PIRSF015919">
    <property type="entry name" value="TFIIH_SSL1"/>
    <property type="match status" value="1"/>
</dbReference>
<dbReference type="SMART" id="SM01047">
    <property type="entry name" value="C1_4"/>
    <property type="match status" value="1"/>
</dbReference>
<dbReference type="SMART" id="SM00327">
    <property type="entry name" value="VWA"/>
    <property type="match status" value="1"/>
</dbReference>
<dbReference type="SUPFAM" id="SSF57889">
    <property type="entry name" value="Cysteine-rich domain"/>
    <property type="match status" value="1"/>
</dbReference>
<dbReference type="SUPFAM" id="SSF53300">
    <property type="entry name" value="vWA-like"/>
    <property type="match status" value="1"/>
</dbReference>
<dbReference type="PROSITE" id="PS50234">
    <property type="entry name" value="VWFA"/>
    <property type="match status" value="1"/>
</dbReference>
<feature type="chain" id="PRO_0000327565" description="General transcription factor IIH subunit 2">
    <location>
        <begin position="1"/>
        <end position="395"/>
    </location>
</feature>
<feature type="domain" description="VWFA" evidence="3">
    <location>
        <begin position="60"/>
        <end position="236"/>
    </location>
</feature>
<feature type="zinc finger region" description="C4-type">
    <location>
        <begin position="291"/>
        <end position="308"/>
    </location>
</feature>
<feature type="modified residue" description="Phosphotyrosine" evidence="1">
    <location>
        <position position="95"/>
    </location>
</feature>
<name>TF2H2_BOVIN</name>
<evidence type="ECO:0000250" key="1">
    <source>
        <dbReference type="UniProtKB" id="A0JN27"/>
    </source>
</evidence>
<evidence type="ECO:0000250" key="2">
    <source>
        <dbReference type="UniProtKB" id="Q13888"/>
    </source>
</evidence>
<evidence type="ECO:0000255" key="3">
    <source>
        <dbReference type="PROSITE-ProRule" id="PRU00219"/>
    </source>
</evidence>
<evidence type="ECO:0000305" key="4"/>
<gene>
    <name type="primary">GTF2H2</name>
</gene>
<protein>
    <recommendedName>
        <fullName>General transcription factor IIH subunit 2</fullName>
    </recommendedName>
    <alternativeName>
        <fullName>General transcription factor IIH polypeptide 2</fullName>
    </alternativeName>
</protein>
<accession>Q2TBV5</accession>
<comment type="function">
    <text evidence="2">Component of the general transcription and DNA repair factor IIH (TFIIH) core complex, which is involved in general and transcription-coupled nucleotide excision repair (NER) of damaged DNA and, when complexed to CAK, in RNA transcription by RNA polymerase II. In NER, TFIIH acts by opening DNA around the lesion to allow the excision of the damaged oligonucleotide and its replacement by a new DNA fragment. In transcription, TFIIH has an essential role in transcription initiation. When the pre-initiation complex (PIC) has been established, TFIIH is required for promoter opening and promoter escape. Phosphorylation of the C-terminal tail (CTD) of the largest subunit of RNA polymerase II by the kinase module CAK controls the initiation of transcription. The N-terminus of GTF2H2 interacts with and regulates XPD whereas an intact C-terminus is required for a successful escape of RNAP II form the promoter.</text>
</comment>
<comment type="subunit">
    <text evidence="2">Component of the TFIID-containing RNA polymerase II pre-initiation complex that is composed of TBP and at least GTF2A1, GTF2A2, GTF2E1, GTF2E2, GTF2F1, GTF2H2, GTF2H3, GTF2H4, GTF2H5, GTF2B, TCEA1, ERCC2 and ERCC3. Component of the 7-subunit TFIIH core complex composed of XPB/ERCC3, XPD/ERCC2, GTF2H1, GTF2H2, GTF2H3, GTF2H4 and GTF2H5, which is active in NER. The core complex associates with the 3-subunit CDK-activating kinase (CAK) module composed of CCNH/cyclin H, CDK7 and MNAT1 to form the 10-subunit holoenzyme (holo-TFIIH) active in transcription. Interacts with XPB, XPD, GTF2H1 and GTF2H3.</text>
</comment>
<comment type="subcellular location">
    <subcellularLocation>
        <location evidence="2">Nucleus</location>
    </subcellularLocation>
</comment>
<comment type="similarity">
    <text evidence="4">Belongs to the GTF2H2 family.</text>
</comment>
<proteinExistence type="evidence at transcript level"/>
<sequence>MDEEPERTKRWEGGYERTWEILKEDESGSLKATIEDILFKAKRKRVFEHHGQVRLGMMRHLYVVVDGSRTMEDQDLKPNRLTCTLKLLEYFVEEYFDQNPISQIGIIVTKSKRAEKLTELSGNPRKHITSLKKAVDMTCHGEPSLYNSLSMAMQTLKHMPGHTSREVLIIFSSLTTCDPSNIYDLIKSLKAAKIRVSIIGLSAEVRVCTALARETGGTYHVILDESHYKELLTHHVSPPPASSNSECSLIRMGFPQHTIASLSDQDAKPSFSMAHLDSNTEPGLTLGGYFCPQCRAKYCELPVECKICGLTLVSAPHLARSYHHLFPLDAFQEIPLEEHNGERFCYACQGELKDQHVYVCSVCQNVFCVDCDVFVHDSLHCCPGCIHKIPVPSGI</sequence>